<gene>
    <name evidence="1" type="primary">slmA</name>
    <name type="ordered locus">SeSA_A3931</name>
</gene>
<proteinExistence type="inferred from homology"/>
<keyword id="KW-0131">Cell cycle</keyword>
<keyword id="KW-0132">Cell division</keyword>
<keyword id="KW-0175">Coiled coil</keyword>
<keyword id="KW-0963">Cytoplasm</keyword>
<keyword id="KW-0238">DNA-binding</keyword>
<reference key="1">
    <citation type="journal article" date="2011" name="J. Bacteriol.">
        <title>Comparative genomics of 28 Salmonella enterica isolates: evidence for CRISPR-mediated adaptive sublineage evolution.</title>
        <authorList>
            <person name="Fricke W.F."/>
            <person name="Mammel M.K."/>
            <person name="McDermott P.F."/>
            <person name="Tartera C."/>
            <person name="White D.G."/>
            <person name="Leclerc J.E."/>
            <person name="Ravel J."/>
            <person name="Cebula T.A."/>
        </authorList>
    </citation>
    <scope>NUCLEOTIDE SEQUENCE [LARGE SCALE GENOMIC DNA]</scope>
    <source>
        <strain>CVM19633</strain>
    </source>
</reference>
<feature type="chain" id="PRO_1000188401" description="Nucleoid occlusion factor SlmA">
    <location>
        <begin position="1"/>
        <end position="198"/>
    </location>
</feature>
<feature type="domain" description="HTH tetR-type" evidence="1">
    <location>
        <begin position="10"/>
        <end position="70"/>
    </location>
</feature>
<feature type="DNA-binding region" description="H-T-H motif" evidence="1">
    <location>
        <begin position="33"/>
        <end position="52"/>
    </location>
</feature>
<feature type="coiled-coil region" evidence="1">
    <location>
        <begin position="117"/>
        <end position="144"/>
    </location>
</feature>
<dbReference type="EMBL" id="CP001127">
    <property type="protein sequence ID" value="ACF88903.1"/>
    <property type="molecule type" value="Genomic_DNA"/>
</dbReference>
<dbReference type="RefSeq" id="WP_000818607.1">
    <property type="nucleotide sequence ID" value="NC_011094.1"/>
</dbReference>
<dbReference type="SMR" id="B4TZY2"/>
<dbReference type="KEGG" id="sew:SeSA_A3931"/>
<dbReference type="HOGENOM" id="CLU_069356_5_0_6"/>
<dbReference type="Proteomes" id="UP000001865">
    <property type="component" value="Chromosome"/>
</dbReference>
<dbReference type="GO" id="GO:0043590">
    <property type="term" value="C:bacterial nucleoid"/>
    <property type="evidence" value="ECO:0007669"/>
    <property type="project" value="UniProtKB-UniRule"/>
</dbReference>
<dbReference type="GO" id="GO:0005737">
    <property type="term" value="C:cytoplasm"/>
    <property type="evidence" value="ECO:0007669"/>
    <property type="project" value="UniProtKB-UniRule"/>
</dbReference>
<dbReference type="GO" id="GO:0003700">
    <property type="term" value="F:DNA-binding transcription factor activity"/>
    <property type="evidence" value="ECO:0007669"/>
    <property type="project" value="TreeGrafter"/>
</dbReference>
<dbReference type="GO" id="GO:0000976">
    <property type="term" value="F:transcription cis-regulatory region binding"/>
    <property type="evidence" value="ECO:0007669"/>
    <property type="project" value="TreeGrafter"/>
</dbReference>
<dbReference type="GO" id="GO:0051301">
    <property type="term" value="P:cell division"/>
    <property type="evidence" value="ECO:0007669"/>
    <property type="project" value="UniProtKB-KW"/>
</dbReference>
<dbReference type="GO" id="GO:0010974">
    <property type="term" value="P:negative regulation of division septum assembly"/>
    <property type="evidence" value="ECO:0007669"/>
    <property type="project" value="InterPro"/>
</dbReference>
<dbReference type="FunFam" id="1.10.357.10:FF:000002">
    <property type="entry name" value="Nucleoid occlusion factor SlmA"/>
    <property type="match status" value="1"/>
</dbReference>
<dbReference type="Gene3D" id="1.10.357.10">
    <property type="entry name" value="Tetracycline Repressor, domain 2"/>
    <property type="match status" value="1"/>
</dbReference>
<dbReference type="HAMAP" id="MF_01839">
    <property type="entry name" value="NO_factor_SlmA"/>
    <property type="match status" value="1"/>
</dbReference>
<dbReference type="InterPro" id="IPR023772">
    <property type="entry name" value="DNA-bd_HTH_TetR-type_CS"/>
</dbReference>
<dbReference type="InterPro" id="IPR009057">
    <property type="entry name" value="Homeodomain-like_sf"/>
</dbReference>
<dbReference type="InterPro" id="IPR050109">
    <property type="entry name" value="HTH-type_TetR-like_transc_reg"/>
</dbReference>
<dbReference type="InterPro" id="IPR001647">
    <property type="entry name" value="HTH_TetR"/>
</dbReference>
<dbReference type="InterPro" id="IPR023769">
    <property type="entry name" value="NO_SlmA"/>
</dbReference>
<dbReference type="InterPro" id="IPR054580">
    <property type="entry name" value="SlmA-like_C"/>
</dbReference>
<dbReference type="InterPro" id="IPR036271">
    <property type="entry name" value="Tet_transcr_reg_TetR-rel_C_sf"/>
</dbReference>
<dbReference type="NCBIfam" id="NF007015">
    <property type="entry name" value="PRK09480.1"/>
    <property type="match status" value="1"/>
</dbReference>
<dbReference type="PANTHER" id="PTHR30055">
    <property type="entry name" value="HTH-TYPE TRANSCRIPTIONAL REGULATOR RUTR"/>
    <property type="match status" value="1"/>
</dbReference>
<dbReference type="PANTHER" id="PTHR30055:SF183">
    <property type="entry name" value="NUCLEOID OCCLUSION FACTOR SLMA"/>
    <property type="match status" value="1"/>
</dbReference>
<dbReference type="Pfam" id="PF22276">
    <property type="entry name" value="SlmA-like_C"/>
    <property type="match status" value="1"/>
</dbReference>
<dbReference type="Pfam" id="PF00440">
    <property type="entry name" value="TetR_N"/>
    <property type="match status" value="1"/>
</dbReference>
<dbReference type="SUPFAM" id="SSF46689">
    <property type="entry name" value="Homeodomain-like"/>
    <property type="match status" value="1"/>
</dbReference>
<dbReference type="SUPFAM" id="SSF48498">
    <property type="entry name" value="Tetracyclin repressor-like, C-terminal domain"/>
    <property type="match status" value="1"/>
</dbReference>
<dbReference type="PROSITE" id="PS01081">
    <property type="entry name" value="HTH_TETR_1"/>
    <property type="match status" value="1"/>
</dbReference>
<dbReference type="PROSITE" id="PS50977">
    <property type="entry name" value="HTH_TETR_2"/>
    <property type="match status" value="1"/>
</dbReference>
<comment type="function">
    <text evidence="1">Required for nucleoid occlusion (NO) phenomenon, which prevents Z-ring formation and cell division over the nucleoid. Acts as a DNA-associated cell division inhibitor that binds simultaneously chromosomal DNA and FtsZ, and disrupts the assembly of FtsZ polymers. SlmA-DNA-binding sequences (SBS) are dispersed on non-Ter regions of the chromosome, preventing FtsZ polymerization at these regions.</text>
</comment>
<comment type="subunit">
    <text evidence="1">Homodimer. Interacts with FtsZ.</text>
</comment>
<comment type="subcellular location">
    <subcellularLocation>
        <location evidence="1">Cytoplasm</location>
        <location evidence="1">Nucleoid</location>
    </subcellularLocation>
</comment>
<comment type="similarity">
    <text evidence="1">Belongs to the nucleoid occlusion factor SlmA family.</text>
</comment>
<protein>
    <recommendedName>
        <fullName evidence="1">Nucleoid occlusion factor SlmA</fullName>
    </recommendedName>
</protein>
<name>SLMA_SALSV</name>
<sequence length="198" mass="22864">MAEKQTAKRNRREEILQSLALMLESSDGSQRITTAKLAASVGVSEAALYRHFPSKTRMFDSLIEFIEDSLITRINLILKDEKNTSTRLRLIVLLILGFGERNPGLTRILTGHALMFEQDRLQGRINQLFERIEAQLRQVLREKRMREGEGYTTDENLLASQLLAFCEGMLSRFVRSEFKYRPTDDFDARWPLIAAQLQ</sequence>
<organism>
    <name type="scientific">Salmonella schwarzengrund (strain CVM19633)</name>
    <dbReference type="NCBI Taxonomy" id="439843"/>
    <lineage>
        <taxon>Bacteria</taxon>
        <taxon>Pseudomonadati</taxon>
        <taxon>Pseudomonadota</taxon>
        <taxon>Gammaproteobacteria</taxon>
        <taxon>Enterobacterales</taxon>
        <taxon>Enterobacteriaceae</taxon>
        <taxon>Salmonella</taxon>
    </lineage>
</organism>
<evidence type="ECO:0000255" key="1">
    <source>
        <dbReference type="HAMAP-Rule" id="MF_01839"/>
    </source>
</evidence>
<accession>B4TZY2</accession>